<comment type="interaction">
    <interactant intactId="EBI-8602056">
        <id>Q8WW59</id>
    </interactant>
    <interactant intactId="EBI-1044001">
        <id>O75964</id>
        <label>ATP5MG</label>
    </interactant>
    <organismsDiffer>false</organismsDiffer>
    <experiments>2</experiments>
</comment>
<comment type="interaction">
    <interactant intactId="EBI-8602056">
        <id>Q8WW59</id>
    </interactant>
    <interactant intactId="EBI-354334">
        <id>P24534</id>
        <label>EEF1B2</label>
    </interactant>
    <organismsDiffer>false</organismsDiffer>
    <experiments>3</experiments>
</comment>
<proteinExistence type="evidence at protein level"/>
<accession>Q8WW59</accession>
<accession>A8K7A5</accession>
<sequence>MALLFARSLRLCRWGAKRLGVASTEAQRGVSFKLEEKTAHSSLALFRDDTGVKYGLVGLEPTKVALNVERFREWAVVLADTAVTSGRHYWEVTVKRSQQFRIGVADVDMSRDSCIGVDDRSWVFTYAQRKWYTMLANEKAPVEGIGQPEKVGLLLEYEAQKLSLVDVSQVSVVHTLQTDFRGPVVPAFALWDGELLTHSGLEVPEGL</sequence>
<gene>
    <name type="primary">SPRYD4</name>
</gene>
<evidence type="ECO:0000250" key="1">
    <source>
        <dbReference type="UniProtKB" id="Q91WK1"/>
    </source>
</evidence>
<evidence type="ECO:0000255" key="2">
    <source>
        <dbReference type="PROSITE-ProRule" id="PRU00548"/>
    </source>
</evidence>
<evidence type="ECO:0007744" key="3">
    <source>
    </source>
</evidence>
<name>SPRY4_HUMAN</name>
<feature type="chain" id="PRO_0000240856" description="SPRY domain-containing protein 4">
    <location>
        <begin position="1"/>
        <end position="207"/>
    </location>
</feature>
<feature type="domain" description="B30.2/SPRY" evidence="2">
    <location>
        <begin position="12"/>
        <end position="206"/>
    </location>
</feature>
<feature type="modified residue" description="N6-acetyllysine" evidence="1">
    <location>
        <position position="53"/>
    </location>
</feature>
<feature type="modified residue" description="N6-acetyllysine" evidence="3">
    <location>
        <position position="130"/>
    </location>
</feature>
<feature type="modified residue" description="N6-succinyllysine" evidence="1">
    <location>
        <position position="139"/>
    </location>
</feature>
<feature type="sequence variant" id="VAR_051381" description="In dbSNP:rs2657881.">
    <original>T</original>
    <variation>M</variation>
    <location>
        <position position="50"/>
    </location>
</feature>
<reference key="1">
    <citation type="submission" date="2001-11" db="EMBL/GenBank/DDBJ databases">
        <authorList>
            <person name="Guo J.H."/>
            <person name="Zan Q."/>
            <person name="She X.Y."/>
            <person name="Li D."/>
            <person name="Yu L."/>
        </authorList>
    </citation>
    <scope>NUCLEOTIDE SEQUENCE [LARGE SCALE MRNA]</scope>
    <source>
        <tissue>Brain</tissue>
    </source>
</reference>
<reference key="2">
    <citation type="journal article" date="2004" name="Nat. Genet.">
        <title>Complete sequencing and characterization of 21,243 full-length human cDNAs.</title>
        <authorList>
            <person name="Ota T."/>
            <person name="Suzuki Y."/>
            <person name="Nishikawa T."/>
            <person name="Otsuki T."/>
            <person name="Sugiyama T."/>
            <person name="Irie R."/>
            <person name="Wakamatsu A."/>
            <person name="Hayashi K."/>
            <person name="Sato H."/>
            <person name="Nagai K."/>
            <person name="Kimura K."/>
            <person name="Makita H."/>
            <person name="Sekine M."/>
            <person name="Obayashi M."/>
            <person name="Nishi T."/>
            <person name="Shibahara T."/>
            <person name="Tanaka T."/>
            <person name="Ishii S."/>
            <person name="Yamamoto J."/>
            <person name="Saito K."/>
            <person name="Kawai Y."/>
            <person name="Isono Y."/>
            <person name="Nakamura Y."/>
            <person name="Nagahari K."/>
            <person name="Murakami K."/>
            <person name="Yasuda T."/>
            <person name="Iwayanagi T."/>
            <person name="Wagatsuma M."/>
            <person name="Shiratori A."/>
            <person name="Sudo H."/>
            <person name="Hosoiri T."/>
            <person name="Kaku Y."/>
            <person name="Kodaira H."/>
            <person name="Kondo H."/>
            <person name="Sugawara M."/>
            <person name="Takahashi M."/>
            <person name="Kanda K."/>
            <person name="Yokoi T."/>
            <person name="Furuya T."/>
            <person name="Kikkawa E."/>
            <person name="Omura Y."/>
            <person name="Abe K."/>
            <person name="Kamihara K."/>
            <person name="Katsuta N."/>
            <person name="Sato K."/>
            <person name="Tanikawa M."/>
            <person name="Yamazaki M."/>
            <person name="Ninomiya K."/>
            <person name="Ishibashi T."/>
            <person name="Yamashita H."/>
            <person name="Murakawa K."/>
            <person name="Fujimori K."/>
            <person name="Tanai H."/>
            <person name="Kimata M."/>
            <person name="Watanabe M."/>
            <person name="Hiraoka S."/>
            <person name="Chiba Y."/>
            <person name="Ishida S."/>
            <person name="Ono Y."/>
            <person name="Takiguchi S."/>
            <person name="Watanabe S."/>
            <person name="Yosida M."/>
            <person name="Hotuta T."/>
            <person name="Kusano J."/>
            <person name="Kanehori K."/>
            <person name="Takahashi-Fujii A."/>
            <person name="Hara H."/>
            <person name="Tanase T.-O."/>
            <person name="Nomura Y."/>
            <person name="Togiya S."/>
            <person name="Komai F."/>
            <person name="Hara R."/>
            <person name="Takeuchi K."/>
            <person name="Arita M."/>
            <person name="Imose N."/>
            <person name="Musashino K."/>
            <person name="Yuuki H."/>
            <person name="Oshima A."/>
            <person name="Sasaki N."/>
            <person name="Aotsuka S."/>
            <person name="Yoshikawa Y."/>
            <person name="Matsunawa H."/>
            <person name="Ichihara T."/>
            <person name="Shiohata N."/>
            <person name="Sano S."/>
            <person name="Moriya S."/>
            <person name="Momiyama H."/>
            <person name="Satoh N."/>
            <person name="Takami S."/>
            <person name="Terashima Y."/>
            <person name="Suzuki O."/>
            <person name="Nakagawa S."/>
            <person name="Senoh A."/>
            <person name="Mizoguchi H."/>
            <person name="Goto Y."/>
            <person name="Shimizu F."/>
            <person name="Wakebe H."/>
            <person name="Hishigaki H."/>
            <person name="Watanabe T."/>
            <person name="Sugiyama A."/>
            <person name="Takemoto M."/>
            <person name="Kawakami B."/>
            <person name="Yamazaki M."/>
            <person name="Watanabe K."/>
            <person name="Kumagai A."/>
            <person name="Itakura S."/>
            <person name="Fukuzumi Y."/>
            <person name="Fujimori Y."/>
            <person name="Komiyama M."/>
            <person name="Tashiro H."/>
            <person name="Tanigami A."/>
            <person name="Fujiwara T."/>
            <person name="Ono T."/>
            <person name="Yamada K."/>
            <person name="Fujii Y."/>
            <person name="Ozaki K."/>
            <person name="Hirao M."/>
            <person name="Ohmori Y."/>
            <person name="Kawabata A."/>
            <person name="Hikiji T."/>
            <person name="Kobatake N."/>
            <person name="Inagaki H."/>
            <person name="Ikema Y."/>
            <person name="Okamoto S."/>
            <person name="Okitani R."/>
            <person name="Kawakami T."/>
            <person name="Noguchi S."/>
            <person name="Itoh T."/>
            <person name="Shigeta K."/>
            <person name="Senba T."/>
            <person name="Matsumura K."/>
            <person name="Nakajima Y."/>
            <person name="Mizuno T."/>
            <person name="Morinaga M."/>
            <person name="Sasaki M."/>
            <person name="Togashi T."/>
            <person name="Oyama M."/>
            <person name="Hata H."/>
            <person name="Watanabe M."/>
            <person name="Komatsu T."/>
            <person name="Mizushima-Sugano J."/>
            <person name="Satoh T."/>
            <person name="Shirai Y."/>
            <person name="Takahashi Y."/>
            <person name="Nakagawa K."/>
            <person name="Okumura K."/>
            <person name="Nagase T."/>
            <person name="Nomura N."/>
            <person name="Kikuchi H."/>
            <person name="Masuho Y."/>
            <person name="Yamashita R."/>
            <person name="Nakai K."/>
            <person name="Yada T."/>
            <person name="Nakamura Y."/>
            <person name="Ohara O."/>
            <person name="Isogai T."/>
            <person name="Sugano S."/>
        </authorList>
    </citation>
    <scope>NUCLEOTIDE SEQUENCE [LARGE SCALE MRNA]</scope>
</reference>
<reference key="3">
    <citation type="journal article" date="2006" name="Nature">
        <title>The finished DNA sequence of human chromosome 12.</title>
        <authorList>
            <person name="Scherer S.E."/>
            <person name="Muzny D.M."/>
            <person name="Buhay C.J."/>
            <person name="Chen R."/>
            <person name="Cree A."/>
            <person name="Ding Y."/>
            <person name="Dugan-Rocha S."/>
            <person name="Gill R."/>
            <person name="Gunaratne P."/>
            <person name="Harris R.A."/>
            <person name="Hawes A.C."/>
            <person name="Hernandez J."/>
            <person name="Hodgson A.V."/>
            <person name="Hume J."/>
            <person name="Jackson A."/>
            <person name="Khan Z.M."/>
            <person name="Kovar-Smith C."/>
            <person name="Lewis L.R."/>
            <person name="Lozado R.J."/>
            <person name="Metzker M.L."/>
            <person name="Milosavljevic A."/>
            <person name="Miner G.R."/>
            <person name="Montgomery K.T."/>
            <person name="Morgan M.B."/>
            <person name="Nazareth L.V."/>
            <person name="Scott G."/>
            <person name="Sodergren E."/>
            <person name="Song X.-Z."/>
            <person name="Steffen D."/>
            <person name="Lovering R.C."/>
            <person name="Wheeler D.A."/>
            <person name="Worley K.C."/>
            <person name="Yuan Y."/>
            <person name="Zhang Z."/>
            <person name="Adams C.Q."/>
            <person name="Ansari-Lari M.A."/>
            <person name="Ayele M."/>
            <person name="Brown M.J."/>
            <person name="Chen G."/>
            <person name="Chen Z."/>
            <person name="Clerc-Blankenburg K.P."/>
            <person name="Davis C."/>
            <person name="Delgado O."/>
            <person name="Dinh H.H."/>
            <person name="Draper H."/>
            <person name="Gonzalez-Garay M.L."/>
            <person name="Havlak P."/>
            <person name="Jackson L.R."/>
            <person name="Jacob L.S."/>
            <person name="Kelly S.H."/>
            <person name="Li L."/>
            <person name="Li Z."/>
            <person name="Liu J."/>
            <person name="Liu W."/>
            <person name="Lu J."/>
            <person name="Maheshwari M."/>
            <person name="Nguyen B.-V."/>
            <person name="Okwuonu G.O."/>
            <person name="Pasternak S."/>
            <person name="Perez L.M."/>
            <person name="Plopper F.J.H."/>
            <person name="Santibanez J."/>
            <person name="Shen H."/>
            <person name="Tabor P.E."/>
            <person name="Verduzco D."/>
            <person name="Waldron L."/>
            <person name="Wang Q."/>
            <person name="Williams G.A."/>
            <person name="Zhang J."/>
            <person name="Zhou J."/>
            <person name="Allen C.C."/>
            <person name="Amin A.G."/>
            <person name="Anyalebechi V."/>
            <person name="Bailey M."/>
            <person name="Barbaria J.A."/>
            <person name="Bimage K.E."/>
            <person name="Bryant N.P."/>
            <person name="Burch P.E."/>
            <person name="Burkett C.E."/>
            <person name="Burrell K.L."/>
            <person name="Calderon E."/>
            <person name="Cardenas V."/>
            <person name="Carter K."/>
            <person name="Casias K."/>
            <person name="Cavazos I."/>
            <person name="Cavazos S.R."/>
            <person name="Ceasar H."/>
            <person name="Chacko J."/>
            <person name="Chan S.N."/>
            <person name="Chavez D."/>
            <person name="Christopoulos C."/>
            <person name="Chu J."/>
            <person name="Cockrell R."/>
            <person name="Cox C.D."/>
            <person name="Dang M."/>
            <person name="Dathorne S.R."/>
            <person name="David R."/>
            <person name="Davis C.M."/>
            <person name="Davy-Carroll L."/>
            <person name="Deshazo D.R."/>
            <person name="Donlin J.E."/>
            <person name="D'Souza L."/>
            <person name="Eaves K.A."/>
            <person name="Egan A."/>
            <person name="Emery-Cohen A.J."/>
            <person name="Escotto M."/>
            <person name="Flagg N."/>
            <person name="Forbes L.D."/>
            <person name="Gabisi A.M."/>
            <person name="Garza M."/>
            <person name="Hamilton C."/>
            <person name="Henderson N."/>
            <person name="Hernandez O."/>
            <person name="Hines S."/>
            <person name="Hogues M.E."/>
            <person name="Huang M."/>
            <person name="Idlebird D.G."/>
            <person name="Johnson R."/>
            <person name="Jolivet A."/>
            <person name="Jones S."/>
            <person name="Kagan R."/>
            <person name="King L.M."/>
            <person name="Leal B."/>
            <person name="Lebow H."/>
            <person name="Lee S."/>
            <person name="LeVan J.M."/>
            <person name="Lewis L.C."/>
            <person name="London P."/>
            <person name="Lorensuhewa L.M."/>
            <person name="Loulseged H."/>
            <person name="Lovett D.A."/>
            <person name="Lucier A."/>
            <person name="Lucier R.L."/>
            <person name="Ma J."/>
            <person name="Madu R.C."/>
            <person name="Mapua P."/>
            <person name="Martindale A.D."/>
            <person name="Martinez E."/>
            <person name="Massey E."/>
            <person name="Mawhiney S."/>
            <person name="Meador M.G."/>
            <person name="Mendez S."/>
            <person name="Mercado C."/>
            <person name="Mercado I.C."/>
            <person name="Merritt C.E."/>
            <person name="Miner Z.L."/>
            <person name="Minja E."/>
            <person name="Mitchell T."/>
            <person name="Mohabbat F."/>
            <person name="Mohabbat K."/>
            <person name="Montgomery B."/>
            <person name="Moore N."/>
            <person name="Morris S."/>
            <person name="Munidasa M."/>
            <person name="Ngo R.N."/>
            <person name="Nguyen N.B."/>
            <person name="Nickerson E."/>
            <person name="Nwaokelemeh O.O."/>
            <person name="Nwokenkwo S."/>
            <person name="Obregon M."/>
            <person name="Oguh M."/>
            <person name="Oragunye N."/>
            <person name="Oviedo R.J."/>
            <person name="Parish B.J."/>
            <person name="Parker D.N."/>
            <person name="Parrish J."/>
            <person name="Parks K.L."/>
            <person name="Paul H.A."/>
            <person name="Payton B.A."/>
            <person name="Perez A."/>
            <person name="Perrin W."/>
            <person name="Pickens A."/>
            <person name="Primus E.L."/>
            <person name="Pu L.-L."/>
            <person name="Puazo M."/>
            <person name="Quiles M.M."/>
            <person name="Quiroz J.B."/>
            <person name="Rabata D."/>
            <person name="Reeves K."/>
            <person name="Ruiz S.J."/>
            <person name="Shao H."/>
            <person name="Sisson I."/>
            <person name="Sonaike T."/>
            <person name="Sorelle R.P."/>
            <person name="Sutton A.E."/>
            <person name="Svatek A.F."/>
            <person name="Svetz L.A."/>
            <person name="Tamerisa K.S."/>
            <person name="Taylor T.R."/>
            <person name="Teague B."/>
            <person name="Thomas N."/>
            <person name="Thorn R.D."/>
            <person name="Trejos Z.Y."/>
            <person name="Trevino B.K."/>
            <person name="Ukegbu O.N."/>
            <person name="Urban J.B."/>
            <person name="Vasquez L.I."/>
            <person name="Vera V.A."/>
            <person name="Villasana D.M."/>
            <person name="Wang L."/>
            <person name="Ward-Moore S."/>
            <person name="Warren J.T."/>
            <person name="Wei X."/>
            <person name="White F."/>
            <person name="Williamson A.L."/>
            <person name="Wleczyk R."/>
            <person name="Wooden H.S."/>
            <person name="Wooden S.H."/>
            <person name="Yen J."/>
            <person name="Yoon L."/>
            <person name="Yoon V."/>
            <person name="Zorrilla S.E."/>
            <person name="Nelson D."/>
            <person name="Kucherlapati R."/>
            <person name="Weinstock G."/>
            <person name="Gibbs R.A."/>
        </authorList>
    </citation>
    <scope>NUCLEOTIDE SEQUENCE [LARGE SCALE GENOMIC DNA]</scope>
</reference>
<reference key="4">
    <citation type="submission" date="2005-07" db="EMBL/GenBank/DDBJ databases">
        <authorList>
            <person name="Mural R.J."/>
            <person name="Istrail S."/>
            <person name="Sutton G.G."/>
            <person name="Florea L."/>
            <person name="Halpern A.L."/>
            <person name="Mobarry C.M."/>
            <person name="Lippert R."/>
            <person name="Walenz B."/>
            <person name="Shatkay H."/>
            <person name="Dew I."/>
            <person name="Miller J.R."/>
            <person name="Flanigan M.J."/>
            <person name="Edwards N.J."/>
            <person name="Bolanos R."/>
            <person name="Fasulo D."/>
            <person name="Halldorsson B.V."/>
            <person name="Hannenhalli S."/>
            <person name="Turner R."/>
            <person name="Yooseph S."/>
            <person name="Lu F."/>
            <person name="Nusskern D.R."/>
            <person name="Shue B.C."/>
            <person name="Zheng X.H."/>
            <person name="Zhong F."/>
            <person name="Delcher A.L."/>
            <person name="Huson D.H."/>
            <person name="Kravitz S.A."/>
            <person name="Mouchard L."/>
            <person name="Reinert K."/>
            <person name="Remington K.A."/>
            <person name="Clark A.G."/>
            <person name="Waterman M.S."/>
            <person name="Eichler E.E."/>
            <person name="Adams M.D."/>
            <person name="Hunkapiller M.W."/>
            <person name="Myers E.W."/>
            <person name="Venter J.C."/>
        </authorList>
    </citation>
    <scope>NUCLEOTIDE SEQUENCE [LARGE SCALE GENOMIC DNA]</scope>
</reference>
<reference key="5">
    <citation type="journal article" date="2004" name="Genome Res.">
        <title>The status, quality, and expansion of the NIH full-length cDNA project: the Mammalian Gene Collection (MGC).</title>
        <authorList>
            <consortium name="The MGC Project Team"/>
        </authorList>
    </citation>
    <scope>NUCLEOTIDE SEQUENCE [LARGE SCALE MRNA]</scope>
    <source>
        <tissue>Placenta</tissue>
    </source>
</reference>
<reference key="6">
    <citation type="journal article" date="2009" name="Science">
        <title>Lysine acetylation targets protein complexes and co-regulates major cellular functions.</title>
        <authorList>
            <person name="Choudhary C."/>
            <person name="Kumar C."/>
            <person name="Gnad F."/>
            <person name="Nielsen M.L."/>
            <person name="Rehman M."/>
            <person name="Walther T.C."/>
            <person name="Olsen J.V."/>
            <person name="Mann M."/>
        </authorList>
    </citation>
    <scope>ACETYLATION [LARGE SCALE ANALYSIS] AT LYS-130</scope>
    <scope>IDENTIFICATION BY MASS SPECTROMETRY [LARGE SCALE ANALYSIS]</scope>
</reference>
<reference key="7">
    <citation type="journal article" date="2011" name="BMC Syst. Biol.">
        <title>Initial characterization of the human central proteome.</title>
        <authorList>
            <person name="Burkard T.R."/>
            <person name="Planyavsky M."/>
            <person name="Kaupe I."/>
            <person name="Breitwieser F.P."/>
            <person name="Buerckstuemmer T."/>
            <person name="Bennett K.L."/>
            <person name="Superti-Furga G."/>
            <person name="Colinge J."/>
        </authorList>
    </citation>
    <scope>IDENTIFICATION BY MASS SPECTROMETRY [LARGE SCALE ANALYSIS]</scope>
</reference>
<reference key="8">
    <citation type="journal article" date="2014" name="J. Proteomics">
        <title>An enzyme assisted RP-RPLC approach for in-depth analysis of human liver phosphoproteome.</title>
        <authorList>
            <person name="Bian Y."/>
            <person name="Song C."/>
            <person name="Cheng K."/>
            <person name="Dong M."/>
            <person name="Wang F."/>
            <person name="Huang J."/>
            <person name="Sun D."/>
            <person name="Wang L."/>
            <person name="Ye M."/>
            <person name="Zou H."/>
        </authorList>
    </citation>
    <scope>IDENTIFICATION BY MASS SPECTROMETRY [LARGE SCALE ANALYSIS]</scope>
    <source>
        <tissue>Liver</tissue>
    </source>
</reference>
<reference key="9">
    <citation type="journal article" date="2015" name="Proteomics">
        <title>N-terminome analysis of the human mitochondrial proteome.</title>
        <authorList>
            <person name="Vaca Jacome A.S."/>
            <person name="Rabilloud T."/>
            <person name="Schaeffer-Reiss C."/>
            <person name="Rompais M."/>
            <person name="Ayoub D."/>
            <person name="Lane L."/>
            <person name="Bairoch A."/>
            <person name="Van Dorsselaer A."/>
            <person name="Carapito C."/>
        </authorList>
    </citation>
    <scope>IDENTIFICATION BY MASS SPECTROMETRY [LARGE SCALE ANALYSIS]</scope>
</reference>
<keyword id="KW-0007">Acetylation</keyword>
<keyword id="KW-1267">Proteomics identification</keyword>
<keyword id="KW-1185">Reference proteome</keyword>
<protein>
    <recommendedName>
        <fullName>SPRY domain-containing protein 4</fullName>
    </recommendedName>
</protein>
<dbReference type="EMBL" id="AF451989">
    <property type="protein sequence ID" value="AAP97688.1"/>
    <property type="molecule type" value="mRNA"/>
</dbReference>
<dbReference type="EMBL" id="AK291920">
    <property type="protein sequence ID" value="BAF84609.1"/>
    <property type="molecule type" value="mRNA"/>
</dbReference>
<dbReference type="EMBL" id="AC097104">
    <property type="status" value="NOT_ANNOTATED_CDS"/>
    <property type="molecule type" value="Genomic_DNA"/>
</dbReference>
<dbReference type="EMBL" id="CH471054">
    <property type="protein sequence ID" value="EAW96941.1"/>
    <property type="molecule type" value="Genomic_DNA"/>
</dbReference>
<dbReference type="EMBL" id="BC020844">
    <property type="protein sequence ID" value="AAH20844.1"/>
    <property type="molecule type" value="mRNA"/>
</dbReference>
<dbReference type="CCDS" id="CCDS8920.1"/>
<dbReference type="RefSeq" id="NP_997227.1">
    <property type="nucleotide sequence ID" value="NM_207344.4"/>
</dbReference>
<dbReference type="SMR" id="Q8WW59"/>
<dbReference type="BioGRID" id="129542">
    <property type="interactions" value="62"/>
</dbReference>
<dbReference type="FunCoup" id="Q8WW59">
    <property type="interactions" value="1384"/>
</dbReference>
<dbReference type="IntAct" id="Q8WW59">
    <property type="interactions" value="32"/>
</dbReference>
<dbReference type="MINT" id="Q8WW59"/>
<dbReference type="STRING" id="9606.ENSP00000338034"/>
<dbReference type="GlyGen" id="Q8WW59">
    <property type="glycosylation" value="1 site, 1 O-linked glycan (1 site)"/>
</dbReference>
<dbReference type="iPTMnet" id="Q8WW59"/>
<dbReference type="PhosphoSitePlus" id="Q8WW59"/>
<dbReference type="SwissPalm" id="Q8WW59"/>
<dbReference type="BioMuta" id="SPRYD4"/>
<dbReference type="DMDM" id="296452842"/>
<dbReference type="jPOST" id="Q8WW59"/>
<dbReference type="MassIVE" id="Q8WW59"/>
<dbReference type="PaxDb" id="9606-ENSP00000338034"/>
<dbReference type="PeptideAtlas" id="Q8WW59"/>
<dbReference type="ProteomicsDB" id="74866"/>
<dbReference type="Pumba" id="Q8WW59"/>
<dbReference type="Antibodypedia" id="54497">
    <property type="antibodies" value="40 antibodies from 17 providers"/>
</dbReference>
<dbReference type="DNASU" id="283377"/>
<dbReference type="Ensembl" id="ENST00000338146.7">
    <property type="protein sequence ID" value="ENSP00000338034.5"/>
    <property type="gene ID" value="ENSG00000176422.14"/>
</dbReference>
<dbReference type="GeneID" id="283377"/>
<dbReference type="KEGG" id="hsa:283377"/>
<dbReference type="MANE-Select" id="ENST00000338146.7">
    <property type="protein sequence ID" value="ENSP00000338034.5"/>
    <property type="RefSeq nucleotide sequence ID" value="NM_207344.4"/>
    <property type="RefSeq protein sequence ID" value="NP_997227.1"/>
</dbReference>
<dbReference type="UCSC" id="uc001sli.5">
    <property type="organism name" value="human"/>
</dbReference>
<dbReference type="AGR" id="HGNC:27468"/>
<dbReference type="CTD" id="283377"/>
<dbReference type="DisGeNET" id="283377"/>
<dbReference type="GeneCards" id="SPRYD4"/>
<dbReference type="HGNC" id="HGNC:27468">
    <property type="gene designation" value="SPRYD4"/>
</dbReference>
<dbReference type="HPA" id="ENSG00000176422">
    <property type="expression patterns" value="Tissue enhanced (liver)"/>
</dbReference>
<dbReference type="neXtProt" id="NX_Q8WW59"/>
<dbReference type="OpenTargets" id="ENSG00000176422"/>
<dbReference type="PharmGKB" id="PA143485622"/>
<dbReference type="VEuPathDB" id="HostDB:ENSG00000176422"/>
<dbReference type="eggNOG" id="KOG2177">
    <property type="taxonomic scope" value="Eukaryota"/>
</dbReference>
<dbReference type="GeneTree" id="ENSGT00940000159780"/>
<dbReference type="HOGENOM" id="CLU_013137_11_0_1"/>
<dbReference type="InParanoid" id="Q8WW59"/>
<dbReference type="OMA" id="WVFGYAQ"/>
<dbReference type="OrthoDB" id="9863247at2759"/>
<dbReference type="PAN-GO" id="Q8WW59">
    <property type="GO annotations" value="0 GO annotations based on evolutionary models"/>
</dbReference>
<dbReference type="PhylomeDB" id="Q8WW59"/>
<dbReference type="TreeFam" id="TF317532"/>
<dbReference type="PathwayCommons" id="Q8WW59"/>
<dbReference type="SignaLink" id="Q8WW59"/>
<dbReference type="BioGRID-ORCS" id="283377">
    <property type="hits" value="20 hits in 1088 CRISPR screens"/>
</dbReference>
<dbReference type="ChiTaRS" id="SPRYD4">
    <property type="organism name" value="human"/>
</dbReference>
<dbReference type="GenomeRNAi" id="283377"/>
<dbReference type="Pharos" id="Q8WW59">
    <property type="development level" value="Tdark"/>
</dbReference>
<dbReference type="PRO" id="PR:Q8WW59"/>
<dbReference type="Proteomes" id="UP000005640">
    <property type="component" value="Chromosome 12"/>
</dbReference>
<dbReference type="RNAct" id="Q8WW59">
    <property type="molecule type" value="protein"/>
</dbReference>
<dbReference type="Bgee" id="ENSG00000176422">
    <property type="expression patterns" value="Expressed in tibialis anterior and 126 other cell types or tissues"/>
</dbReference>
<dbReference type="GO" id="GO:0005739">
    <property type="term" value="C:mitochondrion"/>
    <property type="evidence" value="ECO:0006056"/>
    <property type="project" value="FlyBase"/>
</dbReference>
<dbReference type="GO" id="GO:0005634">
    <property type="term" value="C:nucleus"/>
    <property type="evidence" value="ECO:0000314"/>
    <property type="project" value="UniProtKB"/>
</dbReference>
<dbReference type="CDD" id="cd12903">
    <property type="entry name" value="SPRY_PRY_SPRYD4"/>
    <property type="match status" value="1"/>
</dbReference>
<dbReference type="FunFam" id="2.60.120.920:FF:000047">
    <property type="entry name" value="SPRY domain-containing protein 4"/>
    <property type="match status" value="1"/>
</dbReference>
<dbReference type="Gene3D" id="2.60.120.920">
    <property type="match status" value="1"/>
</dbReference>
<dbReference type="InterPro" id="IPR001870">
    <property type="entry name" value="B30.2/SPRY"/>
</dbReference>
<dbReference type="InterPro" id="IPR043136">
    <property type="entry name" value="B30.2/SPRY_sf"/>
</dbReference>
<dbReference type="InterPro" id="IPR003879">
    <property type="entry name" value="Butyrophylin_SPRY"/>
</dbReference>
<dbReference type="InterPro" id="IPR013320">
    <property type="entry name" value="ConA-like_dom_sf"/>
</dbReference>
<dbReference type="InterPro" id="IPR050617">
    <property type="entry name" value="E3_ligase_FN3/SPRY"/>
</dbReference>
<dbReference type="InterPro" id="IPR003877">
    <property type="entry name" value="SPRY_dom"/>
</dbReference>
<dbReference type="PANTHER" id="PTHR24099:SF16">
    <property type="entry name" value="E3 UBIQUITIN-PROTEIN LIGASE MIDLINE-1-LIKE ISOFORM X1"/>
    <property type="match status" value="1"/>
</dbReference>
<dbReference type="PANTHER" id="PTHR24099">
    <property type="entry name" value="E3 UBIQUITIN-PROTEIN LIGASE TRIM36-RELATED"/>
    <property type="match status" value="1"/>
</dbReference>
<dbReference type="Pfam" id="PF00622">
    <property type="entry name" value="SPRY"/>
    <property type="match status" value="1"/>
</dbReference>
<dbReference type="PRINTS" id="PR01407">
    <property type="entry name" value="BUTYPHLNCDUF"/>
</dbReference>
<dbReference type="SMART" id="SM00449">
    <property type="entry name" value="SPRY"/>
    <property type="match status" value="1"/>
</dbReference>
<dbReference type="SUPFAM" id="SSF49899">
    <property type="entry name" value="Concanavalin A-like lectins/glucanases"/>
    <property type="match status" value="1"/>
</dbReference>
<dbReference type="PROSITE" id="PS50188">
    <property type="entry name" value="B302_SPRY"/>
    <property type="match status" value="1"/>
</dbReference>
<organism>
    <name type="scientific">Homo sapiens</name>
    <name type="common">Human</name>
    <dbReference type="NCBI Taxonomy" id="9606"/>
    <lineage>
        <taxon>Eukaryota</taxon>
        <taxon>Metazoa</taxon>
        <taxon>Chordata</taxon>
        <taxon>Craniata</taxon>
        <taxon>Vertebrata</taxon>
        <taxon>Euteleostomi</taxon>
        <taxon>Mammalia</taxon>
        <taxon>Eutheria</taxon>
        <taxon>Euarchontoglires</taxon>
        <taxon>Primates</taxon>
        <taxon>Haplorrhini</taxon>
        <taxon>Catarrhini</taxon>
        <taxon>Hominidae</taxon>
        <taxon>Homo</taxon>
    </lineage>
</organism>